<organism>
    <name type="scientific">Human papillomavirus 42</name>
    <dbReference type="NCBI Taxonomy" id="10590"/>
    <lineage>
        <taxon>Viruses</taxon>
        <taxon>Monodnaviria</taxon>
        <taxon>Shotokuvirae</taxon>
        <taxon>Cossaviricota</taxon>
        <taxon>Papovaviricetes</taxon>
        <taxon>Zurhausenvirales</taxon>
        <taxon>Papillomaviridae</taxon>
        <taxon>Firstpapillomavirinae</taxon>
        <taxon>Alphapapillomavirus</taxon>
        <taxon>Alphapapillomavirus 1</taxon>
    </lineage>
</organism>
<name>VL1_HPV42</name>
<accession>P27233</accession>
<gene>
    <name evidence="1" type="primary">L1</name>
</gene>
<proteinExistence type="inferred from homology"/>
<evidence type="ECO:0000255" key="1">
    <source>
        <dbReference type="HAMAP-Rule" id="MF_04002"/>
    </source>
</evidence>
<evidence type="ECO:0000256" key="2">
    <source>
        <dbReference type="SAM" id="MobiDB-lite"/>
    </source>
</evidence>
<evidence type="ECO:0000305" key="3"/>
<feature type="chain" id="PRO_0000133526" description="Major capsid protein L1">
    <location>
        <begin position="1"/>
        <end position="502"/>
    </location>
</feature>
<feature type="region of interest" description="Disordered" evidence="2">
    <location>
        <begin position="478"/>
        <end position="502"/>
    </location>
</feature>
<feature type="compositionally biased region" description="Basic residues" evidence="2">
    <location>
        <begin position="478"/>
        <end position="487"/>
    </location>
</feature>
<feature type="disulfide bond" description="Interchain (with C-427)" evidence="1">
    <location>
        <position position="174"/>
    </location>
</feature>
<feature type="disulfide bond" description="Interchain (with C-174)" evidence="1">
    <location>
        <position position="427"/>
    </location>
</feature>
<keyword id="KW-0167">Capsid protein</keyword>
<keyword id="KW-1015">Disulfide bond</keyword>
<keyword id="KW-1048">Host nucleus</keyword>
<keyword id="KW-0945">Host-virus interaction</keyword>
<keyword id="KW-0426">Late protein</keyword>
<keyword id="KW-1145">T=7 icosahedral capsid protein</keyword>
<keyword id="KW-1161">Viral attachment to host cell</keyword>
<keyword id="KW-1162">Viral penetration into host cytoplasm</keyword>
<keyword id="KW-0946">Virion</keyword>
<keyword id="KW-1164">Virus endocytosis by host</keyword>
<keyword id="KW-1160">Virus entry into host cell</keyword>
<dbReference type="EMBL" id="M73236">
    <property type="protein sequence ID" value="AAA47048.1"/>
    <property type="status" value="ALT_INIT"/>
    <property type="molecule type" value="Genomic_DNA"/>
</dbReference>
<dbReference type="PIR" id="G39451">
    <property type="entry name" value="P1WL42"/>
</dbReference>
<dbReference type="SMR" id="P27233"/>
<dbReference type="Proteomes" id="UP000009122">
    <property type="component" value="Genome"/>
</dbReference>
<dbReference type="GO" id="GO:0042025">
    <property type="term" value="C:host cell nucleus"/>
    <property type="evidence" value="ECO:0007669"/>
    <property type="project" value="UniProtKB-SubCell"/>
</dbReference>
<dbReference type="GO" id="GO:0039620">
    <property type="term" value="C:T=7 icosahedral viral capsid"/>
    <property type="evidence" value="ECO:0007669"/>
    <property type="project" value="UniProtKB-UniRule"/>
</dbReference>
<dbReference type="GO" id="GO:0005198">
    <property type="term" value="F:structural molecule activity"/>
    <property type="evidence" value="ECO:0007669"/>
    <property type="project" value="UniProtKB-UniRule"/>
</dbReference>
<dbReference type="GO" id="GO:0075509">
    <property type="term" value="P:endocytosis involved in viral entry into host cell"/>
    <property type="evidence" value="ECO:0007669"/>
    <property type="project" value="UniProtKB-KW"/>
</dbReference>
<dbReference type="GO" id="GO:0019062">
    <property type="term" value="P:virion attachment to host cell"/>
    <property type="evidence" value="ECO:0007669"/>
    <property type="project" value="UniProtKB-UniRule"/>
</dbReference>
<dbReference type="Gene3D" id="2.60.175.20">
    <property type="entry name" value="Major capsid L1 (late) superfamily, Papillomavirus"/>
    <property type="match status" value="2"/>
</dbReference>
<dbReference type="HAMAP" id="MF_04002">
    <property type="entry name" value="PPV_L1"/>
    <property type="match status" value="1"/>
</dbReference>
<dbReference type="InterPro" id="IPR002210">
    <property type="entry name" value="Capsid_L1_Papillomavir"/>
</dbReference>
<dbReference type="InterPro" id="IPR036973">
    <property type="entry name" value="Capsid_L1_sf_Papillomavir"/>
</dbReference>
<dbReference type="InterPro" id="IPR011222">
    <property type="entry name" value="dsDNA_vir_gr_I_capsid"/>
</dbReference>
<dbReference type="Pfam" id="PF00500">
    <property type="entry name" value="Late_protein_L1"/>
    <property type="match status" value="1"/>
</dbReference>
<dbReference type="PRINTS" id="PR00865">
    <property type="entry name" value="HPVCAPSIDL1"/>
</dbReference>
<dbReference type="SUPFAM" id="SSF88648">
    <property type="entry name" value="Group I dsDNA viruses"/>
    <property type="match status" value="1"/>
</dbReference>
<organismHost>
    <name type="scientific">Homo sapiens</name>
    <name type="common">Human</name>
    <dbReference type="NCBI Taxonomy" id="9606"/>
</organismHost>
<comment type="function">
    <text evidence="1">Forms an icosahedral capsid with a T=7 symmetry and a 50 nm diameter. The capsid is composed of 72 pentamers linked to each other by disulfide bonds and associated with L2 proteins. Binds to heparan sulfate proteoglycans on cell surface of basal layer keratinocytes to provide initial virion attachment. This binding mediates a conformational change in the virus capsid that facilitates efficient infection. The virion enters the host cell via endocytosis. During virus trafficking, L1 protein dissociates from the viral DNA and the genomic DNA is released to the host nucleus. The virion assembly takes place within the cell nucleus. Encapsulates the genomic DNA together with protein L2.</text>
</comment>
<comment type="subunit">
    <text evidence="1">Self-assembles into homopentamers. The capsid has an icosahedral symmetry and consists of 72 capsomers, with each capsomer being a pentamer of L1. Interacts with the minor capsid protein L2; this interaction is necessary for viral genome encapsidation. Interacts with protein E2; this interaction enhances E2-dependent replication and transcription activation.</text>
</comment>
<comment type="subcellular location">
    <subcellularLocation>
        <location evidence="1">Virion</location>
    </subcellularLocation>
    <subcellularLocation>
        <location evidence="1">Host nucleus</location>
    </subcellularLocation>
</comment>
<comment type="similarity">
    <text evidence="1">Belongs to the papillomaviridae L1 protein family.</text>
</comment>
<comment type="sequence caution" evidence="3">
    <conflict type="erroneous initiation">
        <sequence resource="EMBL-CDS" id="AAA47048"/>
    </conflict>
</comment>
<sequence length="502" mass="56166">MSVWRPSDNKVYLPPPPVSKVVSTDEYVQRTNYFYHASSSRLLVVGHPYYSITKRPNKTSIPKVSGLQYRVFRVRLPDPNKFTLPETNLYNPETQRMVWACVGLEVGRGQPLGVGISGHPLLNKLDDTENAPTYGGGPGTDNRENVSMDYKQTQLCLVGCKPAIGEHWGKGTACTPQSNGDCPPLELKNSFIQDGDMVDVGFGALDFGALQSSKAEVPLDIVNSITKYPDYLKMSAEAYGDSMFFFLRREQMFVRHLFNRAGAIGEPVPDELYTKAANNASGRHNLGSSIYYPTPSGSMVTSDAQLFNKPYWLQQAQGHNNGICWGNQLFLTVVDTTRSTNMTLCATATSGDTYTAANFKEYLRHAEEYDVQFIFQLCKITLTVEVMSYIHNMNPNILEEWNVGVAPPPSGTLEDSYRYVQSEAIRCQAKVTTPEKKDPYSDFWFWEVNLSEKFSTDLDQFPLGRKFLLQAGLRARPKLSVGKRKASTAKSVSSAKRKKTHK</sequence>
<protein>
    <recommendedName>
        <fullName evidence="1">Major capsid protein L1</fullName>
    </recommendedName>
</protein>
<reference key="1">
    <citation type="journal article" date="1992" name="Virology">
        <title>Human papillomavirus type 42: new sequences, conserved genome organization.</title>
        <authorList>
            <person name="Philipp W."/>
            <person name="Honore N."/>
            <person name="Sapp M."/>
            <person name="Cole S.T."/>
            <person name="Streeck R.E."/>
        </authorList>
    </citation>
    <scope>NUCLEOTIDE SEQUENCE [GENOMIC DNA]</scope>
</reference>